<organism>
    <name type="scientific">Bacillus subtilis (strain 168)</name>
    <dbReference type="NCBI Taxonomy" id="224308"/>
    <lineage>
        <taxon>Bacteria</taxon>
        <taxon>Bacillati</taxon>
        <taxon>Bacillota</taxon>
        <taxon>Bacilli</taxon>
        <taxon>Bacillales</taxon>
        <taxon>Bacillaceae</taxon>
        <taxon>Bacillus</taxon>
    </lineage>
</organism>
<name>YWMC_BACSU</name>
<dbReference type="EMBL" id="Z81356">
    <property type="protein sequence ID" value="CAB03680.1"/>
    <property type="molecule type" value="Genomic_DNA"/>
</dbReference>
<dbReference type="EMBL" id="AL009126">
    <property type="protein sequence ID" value="CAB15691.1"/>
    <property type="molecule type" value="Genomic_DNA"/>
</dbReference>
<dbReference type="PIR" id="G70062">
    <property type="entry name" value="G70062"/>
</dbReference>
<dbReference type="RefSeq" id="NP_391555.1">
    <property type="nucleotide sequence ID" value="NC_000964.3"/>
</dbReference>
<dbReference type="RefSeq" id="WP_003227700.1">
    <property type="nucleotide sequence ID" value="NZ_OZ025638.1"/>
</dbReference>
<dbReference type="SMR" id="P70960"/>
<dbReference type="FunCoup" id="P70960">
    <property type="interactions" value="12"/>
</dbReference>
<dbReference type="STRING" id="224308.BSU36740"/>
<dbReference type="PaxDb" id="224308-BSU36740"/>
<dbReference type="DNASU" id="936990"/>
<dbReference type="EnsemblBacteria" id="CAB15691">
    <property type="protein sequence ID" value="CAB15691"/>
    <property type="gene ID" value="BSU_36740"/>
</dbReference>
<dbReference type="GeneID" id="936990"/>
<dbReference type="KEGG" id="bsu:BSU36740"/>
<dbReference type="PATRIC" id="fig|224308.179.peg.3978"/>
<dbReference type="eggNOG" id="COG2304">
    <property type="taxonomic scope" value="Bacteria"/>
</dbReference>
<dbReference type="InParanoid" id="P70960"/>
<dbReference type="OrthoDB" id="9783818at2"/>
<dbReference type="PhylomeDB" id="P70960"/>
<dbReference type="BioCyc" id="BSUB:BSU36740-MONOMER"/>
<dbReference type="Proteomes" id="UP000001570">
    <property type="component" value="Chromosome"/>
</dbReference>
<dbReference type="CDD" id="cd01456">
    <property type="entry name" value="vWA_ywmD_type"/>
    <property type="match status" value="1"/>
</dbReference>
<dbReference type="Gene3D" id="3.40.50.410">
    <property type="entry name" value="von Willebrand factor, type A domain"/>
    <property type="match status" value="1"/>
</dbReference>
<dbReference type="InterPro" id="IPR002035">
    <property type="entry name" value="VWF_A"/>
</dbReference>
<dbReference type="InterPro" id="IPR036465">
    <property type="entry name" value="vWFA_dom_sf"/>
</dbReference>
<dbReference type="Pfam" id="PF00092">
    <property type="entry name" value="VWA"/>
    <property type="match status" value="1"/>
</dbReference>
<dbReference type="SMART" id="SM00327">
    <property type="entry name" value="VWA"/>
    <property type="match status" value="1"/>
</dbReference>
<dbReference type="SUPFAM" id="SSF53300">
    <property type="entry name" value="vWA-like"/>
    <property type="match status" value="1"/>
</dbReference>
<dbReference type="PROSITE" id="PS50234">
    <property type="entry name" value="VWFA"/>
    <property type="match status" value="1"/>
</dbReference>
<protein>
    <recommendedName>
        <fullName>Uncharacterized protein YwmC</fullName>
    </recommendedName>
</protein>
<sequence length="227" mass="24542">MKKRFSLIMMTGLLFGLTSPAFAAEKTETEAKAPANVAVLLDASGSMAKRIDGVSKFNSAKKEISKFASSLPEGTQVKMSVFGSEGNNKNSGKVQSCEAIRNVYGFQSFNEQSFLNSLNTIGPTGWTPIAKALNEAKSSFDQLDAKGEKVVYLLTDGEETCGGNPIKTAKELQKDNITVNVIGFDYKEGYKGQLNAIAKVGGGEYFPAYTQKDVEKIFTQQSLMLSK</sequence>
<reference key="1">
    <citation type="journal article" date="1997" name="Microbiology">
        <title>The Bacillus subtilis genome from gerBC (311 degrees) to licR (334 degrees).</title>
        <authorList>
            <person name="Presecan E."/>
            <person name="Moszer I."/>
            <person name="Boursier L."/>
            <person name="Cruz Ramos H."/>
            <person name="De La Fuente V."/>
            <person name="Hullo M.-F."/>
            <person name="Lelong C."/>
            <person name="Schleich S."/>
            <person name="Sekowska A."/>
            <person name="Song B.H."/>
            <person name="Villani G."/>
            <person name="Kunst F."/>
            <person name="Danchin A."/>
            <person name="Glaser P."/>
        </authorList>
    </citation>
    <scope>NUCLEOTIDE SEQUENCE [GENOMIC DNA]</scope>
    <source>
        <strain>168</strain>
    </source>
</reference>
<reference key="2">
    <citation type="journal article" date="1997" name="Nature">
        <title>The complete genome sequence of the Gram-positive bacterium Bacillus subtilis.</title>
        <authorList>
            <person name="Kunst F."/>
            <person name="Ogasawara N."/>
            <person name="Moszer I."/>
            <person name="Albertini A.M."/>
            <person name="Alloni G."/>
            <person name="Azevedo V."/>
            <person name="Bertero M.G."/>
            <person name="Bessieres P."/>
            <person name="Bolotin A."/>
            <person name="Borchert S."/>
            <person name="Borriss R."/>
            <person name="Boursier L."/>
            <person name="Brans A."/>
            <person name="Braun M."/>
            <person name="Brignell S.C."/>
            <person name="Bron S."/>
            <person name="Brouillet S."/>
            <person name="Bruschi C.V."/>
            <person name="Caldwell B."/>
            <person name="Capuano V."/>
            <person name="Carter N.M."/>
            <person name="Choi S.-K."/>
            <person name="Codani J.-J."/>
            <person name="Connerton I.F."/>
            <person name="Cummings N.J."/>
            <person name="Daniel R.A."/>
            <person name="Denizot F."/>
            <person name="Devine K.M."/>
            <person name="Duesterhoeft A."/>
            <person name="Ehrlich S.D."/>
            <person name="Emmerson P.T."/>
            <person name="Entian K.-D."/>
            <person name="Errington J."/>
            <person name="Fabret C."/>
            <person name="Ferrari E."/>
            <person name="Foulger D."/>
            <person name="Fritz C."/>
            <person name="Fujita M."/>
            <person name="Fujita Y."/>
            <person name="Fuma S."/>
            <person name="Galizzi A."/>
            <person name="Galleron N."/>
            <person name="Ghim S.-Y."/>
            <person name="Glaser P."/>
            <person name="Goffeau A."/>
            <person name="Golightly E.J."/>
            <person name="Grandi G."/>
            <person name="Guiseppi G."/>
            <person name="Guy B.J."/>
            <person name="Haga K."/>
            <person name="Haiech J."/>
            <person name="Harwood C.R."/>
            <person name="Henaut A."/>
            <person name="Hilbert H."/>
            <person name="Holsappel S."/>
            <person name="Hosono S."/>
            <person name="Hullo M.-F."/>
            <person name="Itaya M."/>
            <person name="Jones L.-M."/>
            <person name="Joris B."/>
            <person name="Karamata D."/>
            <person name="Kasahara Y."/>
            <person name="Klaerr-Blanchard M."/>
            <person name="Klein C."/>
            <person name="Kobayashi Y."/>
            <person name="Koetter P."/>
            <person name="Koningstein G."/>
            <person name="Krogh S."/>
            <person name="Kumano M."/>
            <person name="Kurita K."/>
            <person name="Lapidus A."/>
            <person name="Lardinois S."/>
            <person name="Lauber J."/>
            <person name="Lazarevic V."/>
            <person name="Lee S.-M."/>
            <person name="Levine A."/>
            <person name="Liu H."/>
            <person name="Masuda S."/>
            <person name="Mauel C."/>
            <person name="Medigue C."/>
            <person name="Medina N."/>
            <person name="Mellado R.P."/>
            <person name="Mizuno M."/>
            <person name="Moestl D."/>
            <person name="Nakai S."/>
            <person name="Noback M."/>
            <person name="Noone D."/>
            <person name="O'Reilly M."/>
            <person name="Ogawa K."/>
            <person name="Ogiwara A."/>
            <person name="Oudega B."/>
            <person name="Park S.-H."/>
            <person name="Parro V."/>
            <person name="Pohl T.M."/>
            <person name="Portetelle D."/>
            <person name="Porwollik S."/>
            <person name="Prescott A.M."/>
            <person name="Presecan E."/>
            <person name="Pujic P."/>
            <person name="Purnelle B."/>
            <person name="Rapoport G."/>
            <person name="Rey M."/>
            <person name="Reynolds S."/>
            <person name="Rieger M."/>
            <person name="Rivolta C."/>
            <person name="Rocha E."/>
            <person name="Roche B."/>
            <person name="Rose M."/>
            <person name="Sadaie Y."/>
            <person name="Sato T."/>
            <person name="Scanlan E."/>
            <person name="Schleich S."/>
            <person name="Schroeter R."/>
            <person name="Scoffone F."/>
            <person name="Sekiguchi J."/>
            <person name="Sekowska A."/>
            <person name="Seror S.J."/>
            <person name="Serror P."/>
            <person name="Shin B.-S."/>
            <person name="Soldo B."/>
            <person name="Sorokin A."/>
            <person name="Tacconi E."/>
            <person name="Takagi T."/>
            <person name="Takahashi H."/>
            <person name="Takemaru K."/>
            <person name="Takeuchi M."/>
            <person name="Tamakoshi A."/>
            <person name="Tanaka T."/>
            <person name="Terpstra P."/>
            <person name="Tognoni A."/>
            <person name="Tosato V."/>
            <person name="Uchiyama S."/>
            <person name="Vandenbol M."/>
            <person name="Vannier F."/>
            <person name="Vassarotti A."/>
            <person name="Viari A."/>
            <person name="Wambutt R."/>
            <person name="Wedler E."/>
            <person name="Wedler H."/>
            <person name="Weitzenegger T."/>
            <person name="Winters P."/>
            <person name="Wipat A."/>
            <person name="Yamamoto H."/>
            <person name="Yamane K."/>
            <person name="Yasumoto K."/>
            <person name="Yata K."/>
            <person name="Yoshida K."/>
            <person name="Yoshikawa H.-F."/>
            <person name="Zumstein E."/>
            <person name="Yoshikawa H."/>
            <person name="Danchin A."/>
        </authorList>
    </citation>
    <scope>NUCLEOTIDE SEQUENCE [LARGE SCALE GENOMIC DNA]</scope>
    <source>
        <strain>168</strain>
    </source>
</reference>
<accession>P70960</accession>
<gene>
    <name type="primary">ywmC</name>
    <name type="ordered locus">BSU36740</name>
</gene>
<comment type="similarity">
    <text evidence="3">To B.subtilis YwmD.</text>
</comment>
<feature type="signal peptide" evidence="1">
    <location>
        <begin position="1"/>
        <end position="23"/>
    </location>
</feature>
<feature type="chain" id="PRO_0000013738" description="Uncharacterized protein YwmC">
    <location>
        <begin position="24"/>
        <end position="227"/>
    </location>
</feature>
<feature type="domain" description="VWFA" evidence="2">
    <location>
        <begin position="36"/>
        <end position="227"/>
    </location>
</feature>
<evidence type="ECO:0000255" key="1"/>
<evidence type="ECO:0000255" key="2">
    <source>
        <dbReference type="PROSITE-ProRule" id="PRU00219"/>
    </source>
</evidence>
<evidence type="ECO:0000305" key="3"/>
<keyword id="KW-1185">Reference proteome</keyword>
<keyword id="KW-0732">Signal</keyword>
<proteinExistence type="inferred from homology"/>